<dbReference type="EMBL" id="AE017180">
    <property type="protein sequence ID" value="AAR36225.1"/>
    <property type="molecule type" value="Genomic_DNA"/>
</dbReference>
<dbReference type="RefSeq" id="NP_953875.1">
    <property type="nucleotide sequence ID" value="NC_002939.5"/>
</dbReference>
<dbReference type="RefSeq" id="WP_010943460.1">
    <property type="nucleotide sequence ID" value="NC_002939.5"/>
</dbReference>
<dbReference type="SMR" id="Q749B2"/>
<dbReference type="FunCoup" id="Q749B2">
    <property type="interactions" value="721"/>
</dbReference>
<dbReference type="STRING" id="243231.GSU2832"/>
<dbReference type="EnsemblBacteria" id="AAR36225">
    <property type="protein sequence ID" value="AAR36225"/>
    <property type="gene ID" value="GSU2832"/>
</dbReference>
<dbReference type="KEGG" id="gsu:GSU2832"/>
<dbReference type="PATRIC" id="fig|243231.5.peg.2857"/>
<dbReference type="eggNOG" id="COG0522">
    <property type="taxonomic scope" value="Bacteria"/>
</dbReference>
<dbReference type="HOGENOM" id="CLU_092403_0_2_7"/>
<dbReference type="InParanoid" id="Q749B2"/>
<dbReference type="OrthoDB" id="9803672at2"/>
<dbReference type="Proteomes" id="UP000000577">
    <property type="component" value="Chromosome"/>
</dbReference>
<dbReference type="GO" id="GO:0015935">
    <property type="term" value="C:small ribosomal subunit"/>
    <property type="evidence" value="ECO:0000318"/>
    <property type="project" value="GO_Central"/>
</dbReference>
<dbReference type="GO" id="GO:0019843">
    <property type="term" value="F:rRNA binding"/>
    <property type="evidence" value="ECO:0000318"/>
    <property type="project" value="GO_Central"/>
</dbReference>
<dbReference type="GO" id="GO:0003735">
    <property type="term" value="F:structural constituent of ribosome"/>
    <property type="evidence" value="ECO:0000318"/>
    <property type="project" value="GO_Central"/>
</dbReference>
<dbReference type="GO" id="GO:0042274">
    <property type="term" value="P:ribosomal small subunit biogenesis"/>
    <property type="evidence" value="ECO:0000318"/>
    <property type="project" value="GO_Central"/>
</dbReference>
<dbReference type="GO" id="GO:0006412">
    <property type="term" value="P:translation"/>
    <property type="evidence" value="ECO:0007669"/>
    <property type="project" value="UniProtKB-UniRule"/>
</dbReference>
<dbReference type="CDD" id="cd00165">
    <property type="entry name" value="S4"/>
    <property type="match status" value="1"/>
</dbReference>
<dbReference type="FunFam" id="1.10.1050.10:FF:000001">
    <property type="entry name" value="30S ribosomal protein S4"/>
    <property type="match status" value="1"/>
</dbReference>
<dbReference type="FunFam" id="3.10.290.10:FF:000001">
    <property type="entry name" value="30S ribosomal protein S4"/>
    <property type="match status" value="1"/>
</dbReference>
<dbReference type="Gene3D" id="1.10.1050.10">
    <property type="entry name" value="Ribosomal Protein S4 Delta 41, Chain A, domain 1"/>
    <property type="match status" value="1"/>
</dbReference>
<dbReference type="Gene3D" id="3.10.290.10">
    <property type="entry name" value="RNA-binding S4 domain"/>
    <property type="match status" value="1"/>
</dbReference>
<dbReference type="HAMAP" id="MF_01306_B">
    <property type="entry name" value="Ribosomal_uS4_B"/>
    <property type="match status" value="1"/>
</dbReference>
<dbReference type="InterPro" id="IPR022801">
    <property type="entry name" value="Ribosomal_uS4"/>
</dbReference>
<dbReference type="InterPro" id="IPR005709">
    <property type="entry name" value="Ribosomal_uS4_bac-type"/>
</dbReference>
<dbReference type="InterPro" id="IPR018079">
    <property type="entry name" value="Ribosomal_uS4_CS"/>
</dbReference>
<dbReference type="InterPro" id="IPR001912">
    <property type="entry name" value="Ribosomal_uS4_N"/>
</dbReference>
<dbReference type="InterPro" id="IPR002942">
    <property type="entry name" value="S4_RNA-bd"/>
</dbReference>
<dbReference type="InterPro" id="IPR036986">
    <property type="entry name" value="S4_RNA-bd_sf"/>
</dbReference>
<dbReference type="NCBIfam" id="NF003717">
    <property type="entry name" value="PRK05327.1"/>
    <property type="match status" value="1"/>
</dbReference>
<dbReference type="NCBIfam" id="TIGR01017">
    <property type="entry name" value="rpsD_bact"/>
    <property type="match status" value="1"/>
</dbReference>
<dbReference type="PANTHER" id="PTHR11831">
    <property type="entry name" value="30S 40S RIBOSOMAL PROTEIN"/>
    <property type="match status" value="1"/>
</dbReference>
<dbReference type="PANTHER" id="PTHR11831:SF4">
    <property type="entry name" value="SMALL RIBOSOMAL SUBUNIT PROTEIN US4M"/>
    <property type="match status" value="1"/>
</dbReference>
<dbReference type="Pfam" id="PF00163">
    <property type="entry name" value="Ribosomal_S4"/>
    <property type="match status" value="1"/>
</dbReference>
<dbReference type="Pfam" id="PF01479">
    <property type="entry name" value="S4"/>
    <property type="match status" value="1"/>
</dbReference>
<dbReference type="SMART" id="SM01390">
    <property type="entry name" value="Ribosomal_S4"/>
    <property type="match status" value="1"/>
</dbReference>
<dbReference type="SMART" id="SM00363">
    <property type="entry name" value="S4"/>
    <property type="match status" value="1"/>
</dbReference>
<dbReference type="SUPFAM" id="SSF55174">
    <property type="entry name" value="Alpha-L RNA-binding motif"/>
    <property type="match status" value="1"/>
</dbReference>
<dbReference type="PROSITE" id="PS00632">
    <property type="entry name" value="RIBOSOMAL_S4"/>
    <property type="match status" value="1"/>
</dbReference>
<dbReference type="PROSITE" id="PS50889">
    <property type="entry name" value="S4"/>
    <property type="match status" value="1"/>
</dbReference>
<protein>
    <recommendedName>
        <fullName evidence="1">Small ribosomal subunit protein uS4</fullName>
    </recommendedName>
    <alternativeName>
        <fullName evidence="2">30S ribosomal protein S4</fullName>
    </alternativeName>
</protein>
<accession>Q749B2</accession>
<reference key="1">
    <citation type="journal article" date="2003" name="Science">
        <title>Genome of Geobacter sulfurreducens: metal reduction in subsurface environments.</title>
        <authorList>
            <person name="Methe B.A."/>
            <person name="Nelson K.E."/>
            <person name="Eisen J.A."/>
            <person name="Paulsen I.T."/>
            <person name="Nelson W.C."/>
            <person name="Heidelberg J.F."/>
            <person name="Wu D."/>
            <person name="Wu M."/>
            <person name="Ward N.L."/>
            <person name="Beanan M.J."/>
            <person name="Dodson R.J."/>
            <person name="Madupu R."/>
            <person name="Brinkac L.M."/>
            <person name="Daugherty S.C."/>
            <person name="DeBoy R.T."/>
            <person name="Durkin A.S."/>
            <person name="Gwinn M.L."/>
            <person name="Kolonay J.F."/>
            <person name="Sullivan S.A."/>
            <person name="Haft D.H."/>
            <person name="Selengut J."/>
            <person name="Davidsen T.M."/>
            <person name="Zafar N."/>
            <person name="White O."/>
            <person name="Tran B."/>
            <person name="Romero C."/>
            <person name="Forberger H.A."/>
            <person name="Weidman J.F."/>
            <person name="Khouri H.M."/>
            <person name="Feldblyum T.V."/>
            <person name="Utterback T.R."/>
            <person name="Van Aken S.E."/>
            <person name="Lovley D.R."/>
            <person name="Fraser C.M."/>
        </authorList>
    </citation>
    <scope>NUCLEOTIDE SEQUENCE [LARGE SCALE GENOMIC DNA]</scope>
    <source>
        <strain>ATCC 51573 / DSM 12127 / PCA</strain>
    </source>
</reference>
<organism>
    <name type="scientific">Geobacter sulfurreducens (strain ATCC 51573 / DSM 12127 / PCA)</name>
    <dbReference type="NCBI Taxonomy" id="243231"/>
    <lineage>
        <taxon>Bacteria</taxon>
        <taxon>Pseudomonadati</taxon>
        <taxon>Thermodesulfobacteriota</taxon>
        <taxon>Desulfuromonadia</taxon>
        <taxon>Geobacterales</taxon>
        <taxon>Geobacteraceae</taxon>
        <taxon>Geobacter</taxon>
    </lineage>
</organism>
<sequence length="208" mass="24149">MARYTGPSCRLCRRENMELFLKGERCYTDKCAIKRRNYPPGQHGQGRPKVSNYGVQLREKQKVRRIYGILEKQFRSYFQEADRLKGVTGENLLSLLERRLDNVVYRLGFAASRTEARILVRHNHFTLNGKKANIPSIQLRAGDVVELKEKSRKIACINESLDAVVRRGIPQWLELEKDAYKGVVKTLPVREDITMPIQEQLIVELYSK</sequence>
<keyword id="KW-1185">Reference proteome</keyword>
<keyword id="KW-0687">Ribonucleoprotein</keyword>
<keyword id="KW-0689">Ribosomal protein</keyword>
<keyword id="KW-0694">RNA-binding</keyword>
<keyword id="KW-0699">rRNA-binding</keyword>
<comment type="function">
    <text evidence="1">One of the primary rRNA binding proteins, it binds directly to 16S rRNA where it nucleates assembly of the body of the 30S subunit.</text>
</comment>
<comment type="function">
    <text evidence="1">With S5 and S12 plays an important role in translational accuracy.</text>
</comment>
<comment type="subunit">
    <text evidence="1">Part of the 30S ribosomal subunit. Contacts protein S5. The interaction surface between S4 and S5 is involved in control of translational fidelity.</text>
</comment>
<comment type="similarity">
    <text evidence="1">Belongs to the universal ribosomal protein uS4 family.</text>
</comment>
<feature type="chain" id="PRO_0000132388" description="Small ribosomal subunit protein uS4">
    <location>
        <begin position="1"/>
        <end position="208"/>
    </location>
</feature>
<feature type="domain" description="S4 RNA-binding" evidence="1">
    <location>
        <begin position="98"/>
        <end position="158"/>
    </location>
</feature>
<evidence type="ECO:0000255" key="1">
    <source>
        <dbReference type="HAMAP-Rule" id="MF_01306"/>
    </source>
</evidence>
<evidence type="ECO:0000305" key="2"/>
<gene>
    <name evidence="1" type="primary">rpsD</name>
    <name type="ordered locus">GSU2832</name>
</gene>
<name>RS4_GEOSL</name>
<proteinExistence type="inferred from homology"/>